<organism>
    <name type="scientific">Brucella suis biovar 1 (strain 1330)</name>
    <dbReference type="NCBI Taxonomy" id="204722"/>
    <lineage>
        <taxon>Bacteria</taxon>
        <taxon>Pseudomonadati</taxon>
        <taxon>Pseudomonadota</taxon>
        <taxon>Alphaproteobacteria</taxon>
        <taxon>Hyphomicrobiales</taxon>
        <taxon>Brucellaceae</taxon>
        <taxon>Brucella/Ochrobactrum group</taxon>
        <taxon>Brucella</taxon>
    </lineage>
</organism>
<name>GCSH_BRUSU</name>
<proteinExistence type="inferred from homology"/>
<protein>
    <recommendedName>
        <fullName evidence="1">Glycine cleavage system H protein</fullName>
    </recommendedName>
</protein>
<gene>
    <name evidence="1" type="primary">gcvH</name>
    <name type="ordered locus">BRA0726</name>
    <name type="ordered locus">BS1330_II0719</name>
</gene>
<accession>P64212</accession>
<accession>G0KD96</accession>
<accession>Q8YCG9</accession>
<sequence length="125" mass="13250">MISMANILFTEDHEWINVENGVATVGITIHAQEQLGDLVFVELPEVGRTVAKGDGVVVVESVKAASDVYAPVDGEVVEVNDAVASDPSLINQAAEGEGWLFKLKLADEGQLTGLLDKAGYEKLIG</sequence>
<evidence type="ECO:0000255" key="1">
    <source>
        <dbReference type="HAMAP-Rule" id="MF_00272"/>
    </source>
</evidence>
<evidence type="ECO:0000255" key="2">
    <source>
        <dbReference type="PROSITE-ProRule" id="PRU01066"/>
    </source>
</evidence>
<evidence type="ECO:0000305" key="3"/>
<keyword id="KW-0450">Lipoyl</keyword>
<reference key="1">
    <citation type="journal article" date="2002" name="Proc. Natl. Acad. Sci. U.S.A.">
        <title>The Brucella suis genome reveals fundamental similarities between animal and plant pathogens and symbionts.</title>
        <authorList>
            <person name="Paulsen I.T."/>
            <person name="Seshadri R."/>
            <person name="Nelson K.E."/>
            <person name="Eisen J.A."/>
            <person name="Heidelberg J.F."/>
            <person name="Read T.D."/>
            <person name="Dodson R.J."/>
            <person name="Umayam L.A."/>
            <person name="Brinkac L.M."/>
            <person name="Beanan M.J."/>
            <person name="Daugherty S.C."/>
            <person name="DeBoy R.T."/>
            <person name="Durkin A.S."/>
            <person name="Kolonay J.F."/>
            <person name="Madupu R."/>
            <person name="Nelson W.C."/>
            <person name="Ayodeji B."/>
            <person name="Kraul M."/>
            <person name="Shetty J."/>
            <person name="Malek J.A."/>
            <person name="Van Aken S.E."/>
            <person name="Riedmuller S."/>
            <person name="Tettelin H."/>
            <person name="Gill S.R."/>
            <person name="White O."/>
            <person name="Salzberg S.L."/>
            <person name="Hoover D.L."/>
            <person name="Lindler L.E."/>
            <person name="Halling S.M."/>
            <person name="Boyle S.M."/>
            <person name="Fraser C.M."/>
        </authorList>
    </citation>
    <scope>NUCLEOTIDE SEQUENCE [LARGE SCALE GENOMIC DNA]</scope>
    <source>
        <strain>1330</strain>
    </source>
</reference>
<reference key="2">
    <citation type="journal article" date="2011" name="J. Bacteriol.">
        <title>Revised genome sequence of Brucella suis 1330.</title>
        <authorList>
            <person name="Tae H."/>
            <person name="Shallom S."/>
            <person name="Settlage R."/>
            <person name="Preston D."/>
            <person name="Adams L.G."/>
            <person name="Garner H.R."/>
        </authorList>
    </citation>
    <scope>NUCLEOTIDE SEQUENCE [LARGE SCALE GENOMIC DNA]</scope>
    <source>
        <strain>1330</strain>
    </source>
</reference>
<dbReference type="EMBL" id="AE014292">
    <property type="protein sequence ID" value="AAN33908.1"/>
    <property type="status" value="ALT_INIT"/>
    <property type="molecule type" value="Genomic_DNA"/>
</dbReference>
<dbReference type="EMBL" id="CP002998">
    <property type="protein sequence ID" value="AEM20184.1"/>
    <property type="status" value="ALT_INIT"/>
    <property type="molecule type" value="Genomic_DNA"/>
</dbReference>
<dbReference type="SMR" id="P64212"/>
<dbReference type="KEGG" id="bms:BRA0726"/>
<dbReference type="KEGG" id="bsi:BS1330_II0719"/>
<dbReference type="HOGENOM" id="CLU_097408_2_2_5"/>
<dbReference type="Proteomes" id="UP000007104">
    <property type="component" value="Chromosome II"/>
</dbReference>
<dbReference type="GO" id="GO:0005829">
    <property type="term" value="C:cytosol"/>
    <property type="evidence" value="ECO:0007669"/>
    <property type="project" value="TreeGrafter"/>
</dbReference>
<dbReference type="GO" id="GO:0005960">
    <property type="term" value="C:glycine cleavage complex"/>
    <property type="evidence" value="ECO:0007669"/>
    <property type="project" value="InterPro"/>
</dbReference>
<dbReference type="GO" id="GO:0019464">
    <property type="term" value="P:glycine decarboxylation via glycine cleavage system"/>
    <property type="evidence" value="ECO:0007669"/>
    <property type="project" value="UniProtKB-UniRule"/>
</dbReference>
<dbReference type="CDD" id="cd06848">
    <property type="entry name" value="GCS_H"/>
    <property type="match status" value="1"/>
</dbReference>
<dbReference type="Gene3D" id="2.40.50.100">
    <property type="match status" value="1"/>
</dbReference>
<dbReference type="HAMAP" id="MF_00272">
    <property type="entry name" value="GcvH"/>
    <property type="match status" value="1"/>
</dbReference>
<dbReference type="InterPro" id="IPR003016">
    <property type="entry name" value="2-oxoA_DH_lipoyl-BS"/>
</dbReference>
<dbReference type="InterPro" id="IPR000089">
    <property type="entry name" value="Biotin_lipoyl"/>
</dbReference>
<dbReference type="InterPro" id="IPR002930">
    <property type="entry name" value="GCV_H"/>
</dbReference>
<dbReference type="InterPro" id="IPR033753">
    <property type="entry name" value="GCV_H/Fam206"/>
</dbReference>
<dbReference type="InterPro" id="IPR017453">
    <property type="entry name" value="GCV_H_sub"/>
</dbReference>
<dbReference type="InterPro" id="IPR011053">
    <property type="entry name" value="Single_hybrid_motif"/>
</dbReference>
<dbReference type="NCBIfam" id="TIGR00527">
    <property type="entry name" value="gcvH"/>
    <property type="match status" value="1"/>
</dbReference>
<dbReference type="NCBIfam" id="NF002270">
    <property type="entry name" value="PRK01202.1"/>
    <property type="match status" value="1"/>
</dbReference>
<dbReference type="PANTHER" id="PTHR11715">
    <property type="entry name" value="GLYCINE CLEAVAGE SYSTEM H PROTEIN"/>
    <property type="match status" value="1"/>
</dbReference>
<dbReference type="PANTHER" id="PTHR11715:SF3">
    <property type="entry name" value="GLYCINE CLEAVAGE SYSTEM H PROTEIN-RELATED"/>
    <property type="match status" value="1"/>
</dbReference>
<dbReference type="Pfam" id="PF01597">
    <property type="entry name" value="GCV_H"/>
    <property type="match status" value="1"/>
</dbReference>
<dbReference type="SUPFAM" id="SSF51230">
    <property type="entry name" value="Single hybrid motif"/>
    <property type="match status" value="1"/>
</dbReference>
<dbReference type="PROSITE" id="PS50968">
    <property type="entry name" value="BIOTINYL_LIPOYL"/>
    <property type="match status" value="1"/>
</dbReference>
<dbReference type="PROSITE" id="PS00189">
    <property type="entry name" value="LIPOYL"/>
    <property type="match status" value="1"/>
</dbReference>
<feature type="chain" id="PRO_0000166210" description="Glycine cleavage system H protein">
    <location>
        <begin position="1"/>
        <end position="125"/>
    </location>
</feature>
<feature type="domain" description="Lipoyl-binding" evidence="2">
    <location>
        <begin position="22"/>
        <end position="104"/>
    </location>
</feature>
<feature type="modified residue" description="N6-lipoyllysine" evidence="1">
    <location>
        <position position="63"/>
    </location>
</feature>
<comment type="function">
    <text evidence="1">The glycine cleavage system catalyzes the degradation of glycine. The H protein shuttles the methylamine group of glycine from the P protein to the T protein.</text>
</comment>
<comment type="cofactor">
    <cofactor evidence="1">
        <name>(R)-lipoate</name>
        <dbReference type="ChEBI" id="CHEBI:83088"/>
    </cofactor>
    <text evidence="1">Binds 1 lipoyl cofactor covalently.</text>
</comment>
<comment type="subunit">
    <text evidence="1">The glycine cleavage system is composed of four proteins: P, T, L and H.</text>
</comment>
<comment type="similarity">
    <text evidence="1">Belongs to the GcvH family.</text>
</comment>
<comment type="sequence caution" evidence="3">
    <conflict type="erroneous initiation">
        <sequence resource="EMBL-CDS" id="AAN33908"/>
    </conflict>
</comment>
<comment type="sequence caution" evidence="3">
    <conflict type="erroneous initiation">
        <sequence resource="EMBL-CDS" id="AEM20184"/>
    </conflict>
    <text>Truncated N-terminus.</text>
</comment>